<keyword id="KW-0004">4Fe-4S</keyword>
<keyword id="KW-0963">Cytoplasm</keyword>
<keyword id="KW-0408">Iron</keyword>
<keyword id="KW-0411">Iron-sulfur</keyword>
<keyword id="KW-0479">Metal-binding</keyword>
<keyword id="KW-1185">Reference proteome</keyword>
<keyword id="KW-0949">S-adenosyl-L-methionine</keyword>
<keyword id="KW-0808">Transferase</keyword>
<reference key="1">
    <citation type="journal article" date="2004" name="Science">
        <title>A predator unmasked: life cycle of Bdellovibrio bacteriovorus from a genomic perspective.</title>
        <authorList>
            <person name="Rendulic S."/>
            <person name="Jagtap P."/>
            <person name="Rosinus A."/>
            <person name="Eppinger M."/>
            <person name="Baar C."/>
            <person name="Lanz C."/>
            <person name="Keller H."/>
            <person name="Lambert C."/>
            <person name="Evans K.J."/>
            <person name="Goesmann A."/>
            <person name="Meyer F."/>
            <person name="Sockett R.E."/>
            <person name="Schuster S.C."/>
        </authorList>
    </citation>
    <scope>NUCLEOTIDE SEQUENCE [LARGE SCALE GENOMIC DNA]</scope>
    <source>
        <strain>ATCC 15356 / DSM 50701 / NCIMB 9529 / HD100</strain>
    </source>
</reference>
<sequence>MKQETAQNKKVHFISLGCPKNLVDSEIMAGTLMKDGYEVVGEADQADTVIVNTCGFIEDSKKESIQRILDMSDLKQEGKIKKVVVAGCLTQRYKDDLVEGLPEADLFVGSGEFQNIAKILKNSDEGEKQKTFFNLPTYLQEEATPRVNSQPGHRAYLKISEGCMKRCAFCAIPLIRGNLQSRSIDAIVAEAKLLVAGGVKELIIISHDFTDYGFDIRRKDPTRKESPVELLKALDQVEGLQWIRLMYLYPDGITQEMVQVIKNSTKIVKYFDMPLQHVNDQVLKSMNRKMTRDEIETALMNIREHLPEAVIRTQFIVGFPGETQEQFEELLNFVAEQQFDRVGCFKYSPEENTPGGRMENQIDEETKQYRHDALMEVQQNISREKHSDFVGKTLQVIVEGFSEETDLLLQGRFWGQAPDIDGVVLINDGQAQVGDMVKVHITDNMEYDLIGEIVVEN</sequence>
<feature type="chain" id="PRO_0000374711" description="Ribosomal protein uS12 methylthiotransferase RimO">
    <location>
        <begin position="1"/>
        <end position="457"/>
    </location>
</feature>
<feature type="domain" description="MTTase N-terminal" evidence="1">
    <location>
        <begin position="9"/>
        <end position="128"/>
    </location>
</feature>
<feature type="domain" description="Radical SAM core" evidence="2">
    <location>
        <begin position="149"/>
        <end position="384"/>
    </location>
</feature>
<feature type="domain" description="TRAM" evidence="1">
    <location>
        <begin position="387"/>
        <end position="455"/>
    </location>
</feature>
<feature type="binding site" evidence="1">
    <location>
        <position position="18"/>
    </location>
    <ligand>
        <name>[4Fe-4S] cluster</name>
        <dbReference type="ChEBI" id="CHEBI:49883"/>
        <label>1</label>
    </ligand>
</feature>
<feature type="binding site" evidence="1">
    <location>
        <position position="54"/>
    </location>
    <ligand>
        <name>[4Fe-4S] cluster</name>
        <dbReference type="ChEBI" id="CHEBI:49883"/>
        <label>1</label>
    </ligand>
</feature>
<feature type="binding site" evidence="1">
    <location>
        <position position="88"/>
    </location>
    <ligand>
        <name>[4Fe-4S] cluster</name>
        <dbReference type="ChEBI" id="CHEBI:49883"/>
        <label>1</label>
    </ligand>
</feature>
<feature type="binding site" evidence="1">
    <location>
        <position position="163"/>
    </location>
    <ligand>
        <name>[4Fe-4S] cluster</name>
        <dbReference type="ChEBI" id="CHEBI:49883"/>
        <label>2</label>
        <note>4Fe-4S-S-AdoMet</note>
    </ligand>
</feature>
<feature type="binding site" evidence="1">
    <location>
        <position position="167"/>
    </location>
    <ligand>
        <name>[4Fe-4S] cluster</name>
        <dbReference type="ChEBI" id="CHEBI:49883"/>
        <label>2</label>
        <note>4Fe-4S-S-AdoMet</note>
    </ligand>
</feature>
<feature type="binding site" evidence="1">
    <location>
        <position position="170"/>
    </location>
    <ligand>
        <name>[4Fe-4S] cluster</name>
        <dbReference type="ChEBI" id="CHEBI:49883"/>
        <label>2</label>
        <note>4Fe-4S-S-AdoMet</note>
    </ligand>
</feature>
<gene>
    <name evidence="1" type="primary">rimO</name>
    <name type="ordered locus">Bd3841</name>
</gene>
<name>RIMO_BDEBA</name>
<proteinExistence type="inferred from homology"/>
<dbReference type="EC" id="2.8.4.4" evidence="1"/>
<dbReference type="EMBL" id="BX842656">
    <property type="protein sequence ID" value="CAE81198.1"/>
    <property type="molecule type" value="Genomic_DNA"/>
</dbReference>
<dbReference type="RefSeq" id="WP_011166141.1">
    <property type="nucleotide sequence ID" value="NC_005363.1"/>
</dbReference>
<dbReference type="SMR" id="Q6MGT1"/>
<dbReference type="STRING" id="264462.Bd3841"/>
<dbReference type="GeneID" id="93014610"/>
<dbReference type="KEGG" id="bba:Bd3841"/>
<dbReference type="eggNOG" id="COG0621">
    <property type="taxonomic scope" value="Bacteria"/>
</dbReference>
<dbReference type="HOGENOM" id="CLU_018697_0_1_7"/>
<dbReference type="Proteomes" id="UP000008080">
    <property type="component" value="Chromosome"/>
</dbReference>
<dbReference type="GO" id="GO:0005829">
    <property type="term" value="C:cytosol"/>
    <property type="evidence" value="ECO:0007669"/>
    <property type="project" value="TreeGrafter"/>
</dbReference>
<dbReference type="GO" id="GO:0051539">
    <property type="term" value="F:4 iron, 4 sulfur cluster binding"/>
    <property type="evidence" value="ECO:0007669"/>
    <property type="project" value="UniProtKB-UniRule"/>
</dbReference>
<dbReference type="GO" id="GO:0035599">
    <property type="term" value="F:aspartic acid methylthiotransferase activity"/>
    <property type="evidence" value="ECO:0007669"/>
    <property type="project" value="TreeGrafter"/>
</dbReference>
<dbReference type="GO" id="GO:0046872">
    <property type="term" value="F:metal ion binding"/>
    <property type="evidence" value="ECO:0007669"/>
    <property type="project" value="UniProtKB-KW"/>
</dbReference>
<dbReference type="GO" id="GO:0103039">
    <property type="term" value="F:protein methylthiotransferase activity"/>
    <property type="evidence" value="ECO:0007669"/>
    <property type="project" value="UniProtKB-EC"/>
</dbReference>
<dbReference type="GO" id="GO:0006400">
    <property type="term" value="P:tRNA modification"/>
    <property type="evidence" value="ECO:0007669"/>
    <property type="project" value="InterPro"/>
</dbReference>
<dbReference type="CDD" id="cd01335">
    <property type="entry name" value="Radical_SAM"/>
    <property type="match status" value="1"/>
</dbReference>
<dbReference type="FunFam" id="3.40.50.12160:FF:000003">
    <property type="entry name" value="CDK5 regulatory subunit-associated protein 1"/>
    <property type="match status" value="1"/>
</dbReference>
<dbReference type="FunFam" id="3.80.30.20:FF:000001">
    <property type="entry name" value="tRNA-2-methylthio-N(6)-dimethylallyladenosine synthase 2"/>
    <property type="match status" value="1"/>
</dbReference>
<dbReference type="Gene3D" id="3.40.50.12160">
    <property type="entry name" value="Methylthiotransferase, N-terminal domain"/>
    <property type="match status" value="1"/>
</dbReference>
<dbReference type="Gene3D" id="2.40.50.140">
    <property type="entry name" value="Nucleic acid-binding proteins"/>
    <property type="match status" value="1"/>
</dbReference>
<dbReference type="Gene3D" id="3.80.30.20">
    <property type="entry name" value="tm_1862 like domain"/>
    <property type="match status" value="1"/>
</dbReference>
<dbReference type="HAMAP" id="MF_01865">
    <property type="entry name" value="MTTase_RimO"/>
    <property type="match status" value="1"/>
</dbReference>
<dbReference type="InterPro" id="IPR006638">
    <property type="entry name" value="Elp3/MiaA/NifB-like_rSAM"/>
</dbReference>
<dbReference type="InterPro" id="IPR005839">
    <property type="entry name" value="Methylthiotransferase"/>
</dbReference>
<dbReference type="InterPro" id="IPR020612">
    <property type="entry name" value="Methylthiotransferase_CS"/>
</dbReference>
<dbReference type="InterPro" id="IPR013848">
    <property type="entry name" value="Methylthiotransferase_N"/>
</dbReference>
<dbReference type="InterPro" id="IPR038135">
    <property type="entry name" value="Methylthiotransferase_N_sf"/>
</dbReference>
<dbReference type="InterPro" id="IPR012340">
    <property type="entry name" value="NA-bd_OB-fold"/>
</dbReference>
<dbReference type="InterPro" id="IPR005840">
    <property type="entry name" value="Ribosomal_uS12_MeSTrfase_RimO"/>
</dbReference>
<dbReference type="InterPro" id="IPR007197">
    <property type="entry name" value="rSAM"/>
</dbReference>
<dbReference type="InterPro" id="IPR023404">
    <property type="entry name" value="rSAM_horseshoe"/>
</dbReference>
<dbReference type="InterPro" id="IPR002792">
    <property type="entry name" value="TRAM_dom"/>
</dbReference>
<dbReference type="NCBIfam" id="TIGR01125">
    <property type="entry name" value="30S ribosomal protein S12 methylthiotransferase RimO"/>
    <property type="match status" value="1"/>
</dbReference>
<dbReference type="NCBIfam" id="TIGR00089">
    <property type="entry name" value="MiaB/RimO family radical SAM methylthiotransferase"/>
    <property type="match status" value="1"/>
</dbReference>
<dbReference type="PANTHER" id="PTHR43837">
    <property type="entry name" value="RIBOSOMAL PROTEIN S12 METHYLTHIOTRANSFERASE RIMO"/>
    <property type="match status" value="1"/>
</dbReference>
<dbReference type="PANTHER" id="PTHR43837:SF1">
    <property type="entry name" value="RIBOSOMAL PROTEIN US12 METHYLTHIOTRANSFERASE RIMO"/>
    <property type="match status" value="1"/>
</dbReference>
<dbReference type="Pfam" id="PF04055">
    <property type="entry name" value="Radical_SAM"/>
    <property type="match status" value="1"/>
</dbReference>
<dbReference type="Pfam" id="PF18693">
    <property type="entry name" value="TRAM_2"/>
    <property type="match status" value="1"/>
</dbReference>
<dbReference type="Pfam" id="PF00919">
    <property type="entry name" value="UPF0004"/>
    <property type="match status" value="1"/>
</dbReference>
<dbReference type="SFLD" id="SFLDG01082">
    <property type="entry name" value="B12-binding_domain_containing"/>
    <property type="match status" value="1"/>
</dbReference>
<dbReference type="SFLD" id="SFLDG01061">
    <property type="entry name" value="methylthiotransferase"/>
    <property type="match status" value="1"/>
</dbReference>
<dbReference type="SFLD" id="SFLDF00274">
    <property type="entry name" value="ribosomal_protein_S12_methylth"/>
    <property type="match status" value="1"/>
</dbReference>
<dbReference type="SMART" id="SM00729">
    <property type="entry name" value="Elp3"/>
    <property type="match status" value="1"/>
</dbReference>
<dbReference type="SUPFAM" id="SSF102114">
    <property type="entry name" value="Radical SAM enzymes"/>
    <property type="match status" value="1"/>
</dbReference>
<dbReference type="PROSITE" id="PS51449">
    <property type="entry name" value="MTTASE_N"/>
    <property type="match status" value="1"/>
</dbReference>
<dbReference type="PROSITE" id="PS01278">
    <property type="entry name" value="MTTASE_RADICAL"/>
    <property type="match status" value="1"/>
</dbReference>
<dbReference type="PROSITE" id="PS51918">
    <property type="entry name" value="RADICAL_SAM"/>
    <property type="match status" value="1"/>
</dbReference>
<dbReference type="PROSITE" id="PS50926">
    <property type="entry name" value="TRAM"/>
    <property type="match status" value="1"/>
</dbReference>
<evidence type="ECO:0000255" key="1">
    <source>
        <dbReference type="HAMAP-Rule" id="MF_01865"/>
    </source>
</evidence>
<evidence type="ECO:0000255" key="2">
    <source>
        <dbReference type="PROSITE-ProRule" id="PRU01266"/>
    </source>
</evidence>
<protein>
    <recommendedName>
        <fullName evidence="1">Ribosomal protein uS12 methylthiotransferase RimO</fullName>
        <shortName evidence="1">uS12 MTTase</shortName>
        <shortName evidence="1">uS12 methylthiotransferase</shortName>
        <ecNumber evidence="1">2.8.4.4</ecNumber>
    </recommendedName>
    <alternativeName>
        <fullName evidence="1">Ribosomal protein uS12 (aspartate-C(3))-methylthiotransferase</fullName>
    </alternativeName>
    <alternativeName>
        <fullName evidence="1">Ribosome maturation factor RimO</fullName>
    </alternativeName>
</protein>
<comment type="function">
    <text evidence="1">Catalyzes the methylthiolation of an aspartic acid residue of ribosomal protein uS12.</text>
</comment>
<comment type="catalytic activity">
    <reaction evidence="1">
        <text>L-aspartate(89)-[ribosomal protein uS12]-hydrogen + (sulfur carrier)-SH + AH2 + 2 S-adenosyl-L-methionine = 3-methylsulfanyl-L-aspartate(89)-[ribosomal protein uS12]-hydrogen + (sulfur carrier)-H + 5'-deoxyadenosine + L-methionine + A + S-adenosyl-L-homocysteine + 2 H(+)</text>
        <dbReference type="Rhea" id="RHEA:37087"/>
        <dbReference type="Rhea" id="RHEA-COMP:10460"/>
        <dbReference type="Rhea" id="RHEA-COMP:10461"/>
        <dbReference type="Rhea" id="RHEA-COMP:14737"/>
        <dbReference type="Rhea" id="RHEA-COMP:14739"/>
        <dbReference type="ChEBI" id="CHEBI:13193"/>
        <dbReference type="ChEBI" id="CHEBI:15378"/>
        <dbReference type="ChEBI" id="CHEBI:17319"/>
        <dbReference type="ChEBI" id="CHEBI:17499"/>
        <dbReference type="ChEBI" id="CHEBI:29917"/>
        <dbReference type="ChEBI" id="CHEBI:29961"/>
        <dbReference type="ChEBI" id="CHEBI:57844"/>
        <dbReference type="ChEBI" id="CHEBI:57856"/>
        <dbReference type="ChEBI" id="CHEBI:59789"/>
        <dbReference type="ChEBI" id="CHEBI:64428"/>
        <dbReference type="ChEBI" id="CHEBI:73599"/>
        <dbReference type="EC" id="2.8.4.4"/>
    </reaction>
</comment>
<comment type="cofactor">
    <cofactor evidence="1">
        <name>[4Fe-4S] cluster</name>
        <dbReference type="ChEBI" id="CHEBI:49883"/>
    </cofactor>
    <text evidence="1">Binds 2 [4Fe-4S] clusters. One cluster is coordinated with 3 cysteines and an exchangeable S-adenosyl-L-methionine.</text>
</comment>
<comment type="subcellular location">
    <subcellularLocation>
        <location evidence="1">Cytoplasm</location>
    </subcellularLocation>
</comment>
<comment type="similarity">
    <text evidence="1">Belongs to the methylthiotransferase family. RimO subfamily.</text>
</comment>
<organism>
    <name type="scientific">Bdellovibrio bacteriovorus (strain ATCC 15356 / DSM 50701 / NCIMB 9529 / HD100)</name>
    <dbReference type="NCBI Taxonomy" id="264462"/>
    <lineage>
        <taxon>Bacteria</taxon>
        <taxon>Pseudomonadati</taxon>
        <taxon>Bdellovibrionota</taxon>
        <taxon>Bdellovibrionia</taxon>
        <taxon>Bdellovibrionales</taxon>
        <taxon>Pseudobdellovibrionaceae</taxon>
        <taxon>Bdellovibrio</taxon>
    </lineage>
</organism>
<accession>Q6MGT1</accession>